<keyword id="KW-0484">Methanogenesis</keyword>
<keyword id="KW-1185">Reference proteome</keyword>
<accession>Q8TJC5</accession>
<comment type="function">
    <text evidence="1">Part of a complex that catalyzes the reversible cleavage of acetyl-CoA, allowing growth on acetate as sole source of carbon and energy. The alpha-epsilon subcomponent functions as a carbon monoxide dehydrogenase. The precise role of the epsilon subunit is unclear; it may have a stabilizing role within the alpha(2)epsilon(2) component and/or be involved in electron transfer to FAD during a potential FAD-mediated CO oxidation.</text>
</comment>
<comment type="pathway">
    <text evidence="1">One-carbon metabolism; methanogenesis from acetate.</text>
</comment>
<comment type="subunit">
    <text evidence="1">Heterotetramer of two alpha and two epsilon subunits. The ACDS complex is made up of alpha, epsilon, beta, gamma and delta subunits with a probable stoichiometry of (alpha(2)epsilon(2))(4)-beta(8)-(gamma(1)delta(1))(8).</text>
</comment>
<comment type="similarity">
    <text evidence="1">Belongs to the CdhB family.</text>
</comment>
<evidence type="ECO:0000255" key="1">
    <source>
        <dbReference type="HAMAP-Rule" id="MF_01134"/>
    </source>
</evidence>
<dbReference type="EMBL" id="AE010299">
    <property type="protein sequence ID" value="AAM07212.1"/>
    <property type="molecule type" value="Genomic_DNA"/>
</dbReference>
<dbReference type="RefSeq" id="WP_011023759.1">
    <property type="nucleotide sequence ID" value="NC_003552.1"/>
</dbReference>
<dbReference type="SMR" id="Q8TJC5"/>
<dbReference type="FunCoup" id="Q8TJC5">
    <property type="interactions" value="71"/>
</dbReference>
<dbReference type="STRING" id="188937.MA_3861"/>
<dbReference type="EnsemblBacteria" id="AAM07212">
    <property type="protein sequence ID" value="AAM07212"/>
    <property type="gene ID" value="MA_3861"/>
</dbReference>
<dbReference type="GeneID" id="1475754"/>
<dbReference type="KEGG" id="mac:MA_3861"/>
<dbReference type="HOGENOM" id="CLU_123700_0_0_2"/>
<dbReference type="InParanoid" id="Q8TJC5"/>
<dbReference type="OrthoDB" id="120588at2157"/>
<dbReference type="PhylomeDB" id="Q8TJC5"/>
<dbReference type="UniPathway" id="UPA00642"/>
<dbReference type="Proteomes" id="UP000002487">
    <property type="component" value="Chromosome"/>
</dbReference>
<dbReference type="GO" id="GO:0019385">
    <property type="term" value="P:methanogenesis, from acetate"/>
    <property type="evidence" value="ECO:0007669"/>
    <property type="project" value="UniProtKB-UniRule"/>
</dbReference>
<dbReference type="Gene3D" id="3.40.50.1220">
    <property type="entry name" value="TPP-binding domain"/>
    <property type="match status" value="1"/>
</dbReference>
<dbReference type="HAMAP" id="MF_01134">
    <property type="entry name" value="CdhB"/>
    <property type="match status" value="1"/>
</dbReference>
<dbReference type="InterPro" id="IPR003704">
    <property type="entry name" value="CdhB"/>
</dbReference>
<dbReference type="InterPro" id="IPR029035">
    <property type="entry name" value="DHS-like_NAD/FAD-binding_dom"/>
</dbReference>
<dbReference type="NCBIfam" id="TIGR00315">
    <property type="entry name" value="cdhB"/>
    <property type="match status" value="1"/>
</dbReference>
<dbReference type="Pfam" id="PF02552">
    <property type="entry name" value="CO_dh"/>
    <property type="match status" value="1"/>
</dbReference>
<dbReference type="PIRSF" id="PIRSF006035">
    <property type="entry name" value="CO_dh_b_ACDS_e"/>
    <property type="match status" value="1"/>
</dbReference>
<dbReference type="SUPFAM" id="SSF52467">
    <property type="entry name" value="DHS-like NAD/FAD-binding domain"/>
    <property type="match status" value="1"/>
</dbReference>
<proteinExistence type="inferred from homology"/>
<reference key="1">
    <citation type="journal article" date="2002" name="Genome Res.">
        <title>The genome of Methanosarcina acetivorans reveals extensive metabolic and physiological diversity.</title>
        <authorList>
            <person name="Galagan J.E."/>
            <person name="Nusbaum C."/>
            <person name="Roy A."/>
            <person name="Endrizzi M.G."/>
            <person name="Macdonald P."/>
            <person name="FitzHugh W."/>
            <person name="Calvo S."/>
            <person name="Engels R."/>
            <person name="Smirnov S."/>
            <person name="Atnoor D."/>
            <person name="Brown A."/>
            <person name="Allen N."/>
            <person name="Naylor J."/>
            <person name="Stange-Thomann N."/>
            <person name="DeArellano K."/>
            <person name="Johnson R."/>
            <person name="Linton L."/>
            <person name="McEwan P."/>
            <person name="McKernan K."/>
            <person name="Talamas J."/>
            <person name="Tirrell A."/>
            <person name="Ye W."/>
            <person name="Zimmer A."/>
            <person name="Barber R.D."/>
            <person name="Cann I."/>
            <person name="Graham D.E."/>
            <person name="Grahame D.A."/>
            <person name="Guss A.M."/>
            <person name="Hedderich R."/>
            <person name="Ingram-Smith C."/>
            <person name="Kuettner H.C."/>
            <person name="Krzycki J.A."/>
            <person name="Leigh J.A."/>
            <person name="Li W."/>
            <person name="Liu J."/>
            <person name="Mukhopadhyay B."/>
            <person name="Reeve J.N."/>
            <person name="Smith K."/>
            <person name="Springer T.A."/>
            <person name="Umayam L.A."/>
            <person name="White O."/>
            <person name="White R.H."/>
            <person name="de Macario E.C."/>
            <person name="Ferry J.G."/>
            <person name="Jarrell K.F."/>
            <person name="Jing H."/>
            <person name="Macario A.J.L."/>
            <person name="Paulsen I.T."/>
            <person name="Pritchett M."/>
            <person name="Sowers K.R."/>
            <person name="Swanson R.V."/>
            <person name="Zinder S.H."/>
            <person name="Lander E."/>
            <person name="Metcalf W.W."/>
            <person name="Birren B."/>
        </authorList>
    </citation>
    <scope>NUCLEOTIDE SEQUENCE [LARGE SCALE GENOMIC DNA]</scope>
    <source>
        <strain>ATCC 35395 / DSM 2834 / JCM 12185 / C2A</strain>
    </source>
</reference>
<organism>
    <name type="scientific">Methanosarcina acetivorans (strain ATCC 35395 / DSM 2834 / JCM 12185 / C2A)</name>
    <dbReference type="NCBI Taxonomy" id="188937"/>
    <lineage>
        <taxon>Archaea</taxon>
        <taxon>Methanobacteriati</taxon>
        <taxon>Methanobacteriota</taxon>
        <taxon>Stenosarchaea group</taxon>
        <taxon>Methanomicrobia</taxon>
        <taxon>Methanosarcinales</taxon>
        <taxon>Methanosarcinaceae</taxon>
        <taxon>Methanosarcina</taxon>
    </lineage>
</organism>
<name>ACDE2_METAC</name>
<sequence>MVDTTKNTKLFTSYGVTTSKTTTPEIAAKLISKAKRPLLVVGTKVLDPELLDRAVKIAQKANIPIAATGSSMPGFVGKDVDAKYINLHQLGFYVTDPNWPGLDGNGTYDTLIVLGHIKYYINQVLSGTKNFSTVKAIAIERNYIQNATMSFGNLSKADHYAALDELIDAL</sequence>
<feature type="chain" id="PRO_0000155089" description="Acetyl-CoA decarbonylase/synthase complex subunit epsilon 2">
    <location>
        <begin position="1"/>
        <end position="170"/>
    </location>
</feature>
<gene>
    <name type="primary">cdhB2</name>
    <name type="ordered locus">MA_3861</name>
</gene>
<protein>
    <recommendedName>
        <fullName evidence="1">Acetyl-CoA decarbonylase/synthase complex subunit epsilon 2</fullName>
        <shortName evidence="1">ACDS complex subunit epsilon 2</shortName>
    </recommendedName>
    <alternativeName>
        <fullName evidence="1">ACDS complex carbon monoxide dehydrogenase subunit epsilon 2</fullName>
        <shortName evidence="1">ACDS CODH subunit epsilon 2</shortName>
    </alternativeName>
</protein>